<reference key="1">
    <citation type="submission" date="2006-05" db="EMBL/GenBank/DDBJ databases">
        <title>Complete sequence of chromosome of Silicibacter sp. TM1040.</title>
        <authorList>
            <consortium name="US DOE Joint Genome Institute"/>
            <person name="Copeland A."/>
            <person name="Lucas S."/>
            <person name="Lapidus A."/>
            <person name="Barry K."/>
            <person name="Detter J.C."/>
            <person name="Glavina del Rio T."/>
            <person name="Hammon N."/>
            <person name="Israni S."/>
            <person name="Dalin E."/>
            <person name="Tice H."/>
            <person name="Pitluck S."/>
            <person name="Brettin T."/>
            <person name="Bruce D."/>
            <person name="Han C."/>
            <person name="Tapia R."/>
            <person name="Goodwin L."/>
            <person name="Thompson L.S."/>
            <person name="Gilna P."/>
            <person name="Schmutz J."/>
            <person name="Larimer F."/>
            <person name="Land M."/>
            <person name="Hauser L."/>
            <person name="Kyrpides N."/>
            <person name="Kim E."/>
            <person name="Belas R."/>
            <person name="Moran M.A."/>
            <person name="Buchan A."/>
            <person name="Gonzalez J.M."/>
            <person name="Schell M.A."/>
            <person name="Sun F."/>
            <person name="Richardson P."/>
        </authorList>
    </citation>
    <scope>NUCLEOTIDE SEQUENCE [LARGE SCALE GENOMIC DNA]</scope>
    <source>
        <strain>TM1040</strain>
    </source>
</reference>
<evidence type="ECO:0000255" key="1">
    <source>
        <dbReference type="HAMAP-Rule" id="MF_00048"/>
    </source>
</evidence>
<sequence length="124" mass="13396">MTQDARARGQNAHFAGAAAEEIAIRAYLARGLTLVKSRWRGPHGEIDLILRDGETVIFAEVKSSTTRDKAAARIKPAQMQRVFNSAGAFLEGEPLGQLTPARLDVVLVWGAGEVEIIENAYGHG</sequence>
<gene>
    <name type="ordered locus">TM1040_0449</name>
</gene>
<dbReference type="EMBL" id="CP000377">
    <property type="protein sequence ID" value="ABF63182.1"/>
    <property type="molecule type" value="Genomic_DNA"/>
</dbReference>
<dbReference type="RefSeq" id="WP_011537797.1">
    <property type="nucleotide sequence ID" value="NC_008044.1"/>
</dbReference>
<dbReference type="SMR" id="Q1GJI4"/>
<dbReference type="STRING" id="292414.TM1040_0449"/>
<dbReference type="KEGG" id="sit:TM1040_0449"/>
<dbReference type="eggNOG" id="COG0792">
    <property type="taxonomic scope" value="Bacteria"/>
</dbReference>
<dbReference type="HOGENOM" id="CLU_115353_0_1_5"/>
<dbReference type="OrthoDB" id="9812968at2"/>
<dbReference type="Proteomes" id="UP000000636">
    <property type="component" value="Chromosome"/>
</dbReference>
<dbReference type="GO" id="GO:0003676">
    <property type="term" value="F:nucleic acid binding"/>
    <property type="evidence" value="ECO:0007669"/>
    <property type="project" value="InterPro"/>
</dbReference>
<dbReference type="Gene3D" id="3.40.1350.10">
    <property type="match status" value="1"/>
</dbReference>
<dbReference type="HAMAP" id="MF_00048">
    <property type="entry name" value="UPF0102"/>
    <property type="match status" value="1"/>
</dbReference>
<dbReference type="InterPro" id="IPR011335">
    <property type="entry name" value="Restrct_endonuc-II-like"/>
</dbReference>
<dbReference type="InterPro" id="IPR011856">
    <property type="entry name" value="tRNA_endonuc-like_dom_sf"/>
</dbReference>
<dbReference type="InterPro" id="IPR003509">
    <property type="entry name" value="UPF0102_YraN-like"/>
</dbReference>
<dbReference type="PANTHER" id="PTHR34039">
    <property type="entry name" value="UPF0102 PROTEIN YRAN"/>
    <property type="match status" value="1"/>
</dbReference>
<dbReference type="PANTHER" id="PTHR34039:SF1">
    <property type="entry name" value="UPF0102 PROTEIN YRAN"/>
    <property type="match status" value="1"/>
</dbReference>
<dbReference type="Pfam" id="PF02021">
    <property type="entry name" value="UPF0102"/>
    <property type="match status" value="1"/>
</dbReference>
<dbReference type="SUPFAM" id="SSF52980">
    <property type="entry name" value="Restriction endonuclease-like"/>
    <property type="match status" value="1"/>
</dbReference>
<protein>
    <recommendedName>
        <fullName evidence="1">UPF0102 protein TM1040_0449</fullName>
    </recommendedName>
</protein>
<proteinExistence type="inferred from homology"/>
<keyword id="KW-1185">Reference proteome</keyword>
<organism>
    <name type="scientific">Ruegeria sp. (strain TM1040)</name>
    <name type="common">Silicibacter sp.</name>
    <dbReference type="NCBI Taxonomy" id="292414"/>
    <lineage>
        <taxon>Bacteria</taxon>
        <taxon>Pseudomonadati</taxon>
        <taxon>Pseudomonadota</taxon>
        <taxon>Alphaproteobacteria</taxon>
        <taxon>Rhodobacterales</taxon>
        <taxon>Roseobacteraceae</taxon>
        <taxon>Ruegeria</taxon>
    </lineage>
</organism>
<feature type="chain" id="PRO_0000336263" description="UPF0102 protein TM1040_0449">
    <location>
        <begin position="1"/>
        <end position="124"/>
    </location>
</feature>
<name>Y449_RUEST</name>
<comment type="similarity">
    <text evidence="1">Belongs to the UPF0102 family.</text>
</comment>
<accession>Q1GJI4</accession>